<feature type="signal peptide" evidence="1">
    <location>
        <begin position="1"/>
        <end position="35"/>
    </location>
</feature>
<feature type="chain" id="PRO_0000432095" description="TPD1 protein homolog 1A" evidence="1">
    <location>
        <begin position="36"/>
        <end position="226"/>
    </location>
</feature>
<feature type="mutagenesis site" description="In mil2-2; defective in early anther development." evidence="3">
    <original>Q</original>
    <variation>P</variation>
    <location>
        <position position="83"/>
    </location>
</feature>
<proteinExistence type="evidence at protein level"/>
<comment type="function">
    <text evidence="2 3">Involved in cell specification during anther development. Required for the differentiation of primary parietal cells into secondary parietal cells in anthers (PubMed:22913653). May serve as an extracellular ligand for the MSP1 receptor kinase to limit sporocyte number in ovules (PubMed:18248596).</text>
</comment>
<comment type="subunit">
    <text evidence="2">Interacts with MSP1.</text>
</comment>
<comment type="tissue specificity">
    <text evidence="2">Expressed in roots, and anthers and ovules during meiosis.</text>
</comment>
<comment type="disruption phenotype">
    <text evidence="3">Male-sterile phenotype due to the absence of tapetal cells in the developing anthers.</text>
</comment>
<evidence type="ECO:0000255" key="1"/>
<evidence type="ECO:0000269" key="2">
    <source>
    </source>
</evidence>
<evidence type="ECO:0000269" key="3">
    <source>
    </source>
</evidence>
<evidence type="ECO:0000303" key="4">
    <source>
    </source>
</evidence>
<evidence type="ECO:0000303" key="5">
    <source>
    </source>
</evidence>
<evidence type="ECO:0000305" key="6"/>
<evidence type="ECO:0000312" key="7">
    <source>
        <dbReference type="EMBL" id="ABA98465.1"/>
    </source>
</evidence>
<evidence type="ECO:0000312" key="8">
    <source>
        <dbReference type="EMBL" id="BAF29772.1"/>
    </source>
</evidence>
<accession>Q2QR54</accession>
<accession>A0A0P0Y9Z3</accession>
<sequence length="226" mass="22734">MRVSSASSTPPPPAFAAAAWAVVLLAMLRSDVALAAAASSNDDTGLSPLMPPPPLAAPVPAAVSPAPATPPAVLSPRKLLRPQGADVVGVGFVSGSGGGGGGDGVRTRRVDDGCAGADDIAIYQGRATPLPSGVPAYTVDVMNRCAGGGGGDEECAIAGIHVRCGWFSSVSLVDPRVFRRLGHDDCLLNDGRPLLAGETVSFEYTNSFPYKLSVSVATCVVDPAAP</sequence>
<reference key="1">
    <citation type="journal article" date="2005" name="BMC Biol.">
        <title>The sequence of rice chromosomes 11 and 12, rich in disease resistance genes and recent gene duplications.</title>
        <authorList>
            <consortium name="The rice chromosomes 11 and 12 sequencing consortia"/>
        </authorList>
    </citation>
    <scope>NUCLEOTIDE SEQUENCE [LARGE SCALE GENOMIC DNA]</scope>
    <source>
        <strain>cv. Nipponbare</strain>
    </source>
</reference>
<reference key="2">
    <citation type="journal article" date="2005" name="Nature">
        <title>The map-based sequence of the rice genome.</title>
        <authorList>
            <consortium name="International rice genome sequencing project (IRGSP)"/>
        </authorList>
    </citation>
    <scope>NUCLEOTIDE SEQUENCE [LARGE SCALE GENOMIC DNA]</scope>
    <source>
        <strain>cv. Nipponbare</strain>
    </source>
</reference>
<reference key="3">
    <citation type="journal article" date="2008" name="Nucleic Acids Res.">
        <title>The rice annotation project database (RAP-DB): 2008 update.</title>
        <authorList>
            <consortium name="The rice annotation project (RAP)"/>
        </authorList>
    </citation>
    <scope>GENOME REANNOTATION</scope>
    <source>
        <strain>cv. Nipponbare</strain>
    </source>
</reference>
<reference key="4">
    <citation type="journal article" date="2013" name="Rice">
        <title>Improvement of the Oryza sativa Nipponbare reference genome using next generation sequence and optical map data.</title>
        <authorList>
            <person name="Kawahara Y."/>
            <person name="de la Bastide M."/>
            <person name="Hamilton J.P."/>
            <person name="Kanamori H."/>
            <person name="McCombie W.R."/>
            <person name="Ouyang S."/>
            <person name="Schwartz D.C."/>
            <person name="Tanaka T."/>
            <person name="Wu J."/>
            <person name="Zhou S."/>
            <person name="Childs K.L."/>
            <person name="Davidson R.M."/>
            <person name="Lin H."/>
            <person name="Quesada-Ocampo L."/>
            <person name="Vaillancourt B."/>
            <person name="Sakai H."/>
            <person name="Lee S.S."/>
            <person name="Kim J."/>
            <person name="Numa H."/>
            <person name="Itoh T."/>
            <person name="Buell C.R."/>
            <person name="Matsumoto T."/>
        </authorList>
    </citation>
    <scope>GENOME REANNOTATION</scope>
    <source>
        <strain>cv. Nipponbare</strain>
    </source>
</reference>
<reference key="5">
    <citation type="journal article" date="2003" name="Science">
        <title>Collection, mapping, and annotation of over 28,000 cDNA clones from japonica rice.</title>
        <authorList>
            <consortium name="The rice full-length cDNA consortium"/>
        </authorList>
    </citation>
    <scope>NUCLEOTIDE SEQUENCE [LARGE SCALE MRNA]</scope>
    <source>
        <strain>cv. Nipponbare</strain>
    </source>
</reference>
<reference key="6">
    <citation type="journal article" date="2008" name="Plant J.">
        <title>OsTDL1A binds to the LRR domain of rice receptor kinase MSP1, and is required to limit sporocyte numbers.</title>
        <authorList>
            <person name="Zhao X."/>
            <person name="de Palma J."/>
            <person name="Oane R."/>
            <person name="Gamuyao R."/>
            <person name="Luo M."/>
            <person name="Chaudhury A."/>
            <person name="Herve P."/>
            <person name="Xue Q."/>
            <person name="Bennett J."/>
        </authorList>
    </citation>
    <scope>FUNCTION</scope>
    <scope>INTERACTION WITH MSP1</scope>
    <scope>TISSUE SPECIFICITY</scope>
</reference>
<reference key="7">
    <citation type="journal article" date="2012" name="New Phytol.">
        <title>MIL2 (MICROSPORELESS2) regulates early cell differentiation in the rice anther.</title>
        <authorList>
            <person name="Hong L."/>
            <person name="Tang D."/>
            <person name="Shen Y."/>
            <person name="Hu Q."/>
            <person name="Wang K."/>
            <person name="Li M."/>
            <person name="Lu T."/>
            <person name="Cheng Z."/>
        </authorList>
    </citation>
    <scope>FUNCTION</scope>
    <scope>DISRUPTION PHENOTYPE</scope>
    <scope>MUTAGENESIS OF GLN-83</scope>
</reference>
<dbReference type="EMBL" id="AL713941">
    <property type="status" value="NOT_ANNOTATED_CDS"/>
    <property type="molecule type" value="Genomic_DNA"/>
</dbReference>
<dbReference type="EMBL" id="DP000011">
    <property type="protein sequence ID" value="ABA98465.1"/>
    <property type="molecule type" value="Genomic_DNA"/>
</dbReference>
<dbReference type="EMBL" id="AP008218">
    <property type="protein sequence ID" value="BAF29772.1"/>
    <property type="molecule type" value="Genomic_DNA"/>
</dbReference>
<dbReference type="EMBL" id="AP014968">
    <property type="protein sequence ID" value="BAT17103.1"/>
    <property type="molecule type" value="Genomic_DNA"/>
</dbReference>
<dbReference type="EMBL" id="AK108523">
    <property type="protein sequence ID" value="BAG98429.1"/>
    <property type="molecule type" value="mRNA"/>
</dbReference>
<dbReference type="RefSeq" id="XP_015619000.1">
    <property type="nucleotide sequence ID" value="XM_015763514.1"/>
</dbReference>
<dbReference type="FunCoup" id="Q2QR54">
    <property type="interactions" value="254"/>
</dbReference>
<dbReference type="STRING" id="39947.Q2QR54"/>
<dbReference type="PaxDb" id="39947-Q2QR54"/>
<dbReference type="EnsemblPlants" id="Os12t0472500-01">
    <property type="protein sequence ID" value="Os12t0472500-01"/>
    <property type="gene ID" value="Os12g0472500"/>
</dbReference>
<dbReference type="Gramene" id="Os12t0472500-01">
    <property type="protein sequence ID" value="Os12t0472500-01"/>
    <property type="gene ID" value="Os12g0472500"/>
</dbReference>
<dbReference type="KEGG" id="dosa:Os12g0472500"/>
<dbReference type="eggNOG" id="ENOG502S0K4">
    <property type="taxonomic scope" value="Eukaryota"/>
</dbReference>
<dbReference type="HOGENOM" id="CLU_050138_0_0_1"/>
<dbReference type="InParanoid" id="Q2QR54"/>
<dbReference type="OMA" id="YQGRATA"/>
<dbReference type="OrthoDB" id="1572689at2759"/>
<dbReference type="PlantReactome" id="R-OSA-8986768">
    <property type="pathway name" value="Anther and pollen development"/>
</dbReference>
<dbReference type="Proteomes" id="UP000000763">
    <property type="component" value="Chromosome 12"/>
</dbReference>
<dbReference type="Proteomes" id="UP000059680">
    <property type="component" value="Chromosome 12"/>
</dbReference>
<dbReference type="GO" id="GO:0010234">
    <property type="term" value="P:anther wall tapetum cell fate specification"/>
    <property type="evidence" value="ECO:0000315"/>
    <property type="project" value="UniProtKB"/>
</dbReference>
<dbReference type="GO" id="GO:0001709">
    <property type="term" value="P:cell fate determination"/>
    <property type="evidence" value="ECO:0000318"/>
    <property type="project" value="GO_Central"/>
</dbReference>
<dbReference type="GO" id="GO:0009556">
    <property type="term" value="P:microsporogenesis"/>
    <property type="evidence" value="ECO:0000315"/>
    <property type="project" value="UniProtKB"/>
</dbReference>
<dbReference type="InterPro" id="IPR040361">
    <property type="entry name" value="TPD1"/>
</dbReference>
<dbReference type="PANTHER" id="PTHR33184">
    <property type="entry name" value="PROTEIN TAPETUM DETERMINANT 1-LIKE-RELATED"/>
    <property type="match status" value="1"/>
</dbReference>
<dbReference type="PANTHER" id="PTHR33184:SF61">
    <property type="entry name" value="TPD1 PROTEIN HOMOLOG 1"/>
    <property type="match status" value="1"/>
</dbReference>
<dbReference type="Pfam" id="PF24068">
    <property type="entry name" value="TPD1_C"/>
    <property type="match status" value="1"/>
</dbReference>
<name>TDL1A_ORYSJ</name>
<gene>
    <name evidence="4" type="primary">TDL1A</name>
    <name evidence="5" type="synonym">MIL2</name>
    <name evidence="8" type="ordered locus">Os12g0472500</name>
    <name evidence="7" type="ordered locus">LOC_Os12g28750</name>
</gene>
<protein>
    <recommendedName>
        <fullName evidence="6">TPD1 protein homolog 1A</fullName>
    </recommendedName>
    <alternativeName>
        <fullName evidence="5">Protein MICROSPORELESS 2</fullName>
    </alternativeName>
    <alternativeName>
        <fullName evidence="4">TPD1-like protein 1A</fullName>
        <shortName evidence="4">OsTDL1A</shortName>
    </alternativeName>
</protein>
<keyword id="KW-0221">Differentiation</keyword>
<keyword id="KW-1185">Reference proteome</keyword>
<keyword id="KW-0732">Signal</keyword>
<organism>
    <name type="scientific">Oryza sativa subsp. japonica</name>
    <name type="common">Rice</name>
    <dbReference type="NCBI Taxonomy" id="39947"/>
    <lineage>
        <taxon>Eukaryota</taxon>
        <taxon>Viridiplantae</taxon>
        <taxon>Streptophyta</taxon>
        <taxon>Embryophyta</taxon>
        <taxon>Tracheophyta</taxon>
        <taxon>Spermatophyta</taxon>
        <taxon>Magnoliopsida</taxon>
        <taxon>Liliopsida</taxon>
        <taxon>Poales</taxon>
        <taxon>Poaceae</taxon>
        <taxon>BOP clade</taxon>
        <taxon>Oryzoideae</taxon>
        <taxon>Oryzeae</taxon>
        <taxon>Oryzinae</taxon>
        <taxon>Oryza</taxon>
        <taxon>Oryza sativa</taxon>
    </lineage>
</organism>